<dbReference type="EC" id="3.4.21.-"/>
<dbReference type="EMBL" id="AJ311671">
    <property type="protein sequence ID" value="CAC35028.2"/>
    <property type="molecule type" value="mRNA"/>
</dbReference>
<dbReference type="EMBL" id="CH473952">
    <property type="protein sequence ID" value="EDL82129.1"/>
    <property type="molecule type" value="Genomic_DNA"/>
</dbReference>
<dbReference type="RefSeq" id="NP_445956.1">
    <property type="nucleotide sequence ID" value="NM_053504.1"/>
</dbReference>
<dbReference type="PDB" id="2K4R">
    <property type="method" value="NMR"/>
    <property type="chains" value="A=84-160"/>
</dbReference>
<dbReference type="PDB" id="2K51">
    <property type="method" value="NMR"/>
    <property type="chains" value="A=84-160"/>
</dbReference>
<dbReference type="PDBsum" id="2K4R"/>
<dbReference type="PDBsum" id="2K51"/>
<dbReference type="BMRB" id="G3V801"/>
<dbReference type="SMR" id="G3V801"/>
<dbReference type="FunCoup" id="G3V801">
    <property type="interactions" value="66"/>
</dbReference>
<dbReference type="STRING" id="10116.ENSRNOP00000021116"/>
<dbReference type="MEROPS" id="S01.237"/>
<dbReference type="GlyCosmos" id="G3V801">
    <property type="glycosylation" value="3 sites, No reported glycans"/>
</dbReference>
<dbReference type="GlyGen" id="G3V801">
    <property type="glycosylation" value="3 sites"/>
</dbReference>
<dbReference type="PhosphoSitePlus" id="G3V801"/>
<dbReference type="PaxDb" id="10116-ENSRNOP00000021116"/>
<dbReference type="Ensembl" id="ENSRNOT00000021116.4">
    <property type="protein sequence ID" value="ENSRNOP00000021116.3"/>
    <property type="gene ID" value="ENSRNOG00000015353.4"/>
</dbReference>
<dbReference type="GeneID" id="85266"/>
<dbReference type="KEGG" id="rno:85266"/>
<dbReference type="AGR" id="RGD:69238"/>
<dbReference type="CTD" id="8492"/>
<dbReference type="RGD" id="69238">
    <property type="gene designation" value="Prss12"/>
</dbReference>
<dbReference type="eggNOG" id="KOG3627">
    <property type="taxonomic scope" value="Eukaryota"/>
</dbReference>
<dbReference type="GeneTree" id="ENSGT00940000158131"/>
<dbReference type="HOGENOM" id="CLU_013656_0_0_1"/>
<dbReference type="InParanoid" id="G3V801"/>
<dbReference type="OMA" id="GPIHADN"/>
<dbReference type="OrthoDB" id="5635at9989"/>
<dbReference type="PhylomeDB" id="G3V801"/>
<dbReference type="TreeFam" id="TF329295"/>
<dbReference type="EvolutionaryTrace" id="G3V801"/>
<dbReference type="PRO" id="PR:G3V801"/>
<dbReference type="Proteomes" id="UP000002494">
    <property type="component" value="Chromosome 2"/>
</dbReference>
<dbReference type="Proteomes" id="UP000234681">
    <property type="component" value="Chromosome 2"/>
</dbReference>
<dbReference type="Bgee" id="ENSRNOG00000015353">
    <property type="expression patterns" value="Expressed in kidney and 15 other cell types or tissues"/>
</dbReference>
<dbReference type="GO" id="GO:0030424">
    <property type="term" value="C:axon"/>
    <property type="evidence" value="ECO:0000250"/>
    <property type="project" value="UniProtKB"/>
</dbReference>
<dbReference type="GO" id="GO:0031410">
    <property type="term" value="C:cytoplasmic vesicle"/>
    <property type="evidence" value="ECO:0000266"/>
    <property type="project" value="RGD"/>
</dbReference>
<dbReference type="GO" id="GO:0030425">
    <property type="term" value="C:dendrite"/>
    <property type="evidence" value="ECO:0000266"/>
    <property type="project" value="RGD"/>
</dbReference>
<dbReference type="GO" id="GO:0098978">
    <property type="term" value="C:glutamatergic synapse"/>
    <property type="evidence" value="ECO:0000266"/>
    <property type="project" value="RGD"/>
</dbReference>
<dbReference type="GO" id="GO:0005886">
    <property type="term" value="C:plasma membrane"/>
    <property type="evidence" value="ECO:0000250"/>
    <property type="project" value="UniProtKB"/>
</dbReference>
<dbReference type="GO" id="GO:0098793">
    <property type="term" value="C:presynapse"/>
    <property type="evidence" value="ECO:0000266"/>
    <property type="project" value="RGD"/>
</dbReference>
<dbReference type="GO" id="GO:0098685">
    <property type="term" value="C:Schaffer collateral - CA1 synapse"/>
    <property type="evidence" value="ECO:0000266"/>
    <property type="project" value="RGD"/>
</dbReference>
<dbReference type="GO" id="GO:0045202">
    <property type="term" value="C:synapse"/>
    <property type="evidence" value="ECO:0000266"/>
    <property type="project" value="RGD"/>
</dbReference>
<dbReference type="GO" id="GO:0043083">
    <property type="term" value="C:synaptic cleft"/>
    <property type="evidence" value="ECO:0000266"/>
    <property type="project" value="RGD"/>
</dbReference>
<dbReference type="GO" id="GO:0043195">
    <property type="term" value="C:terminal bouton"/>
    <property type="evidence" value="ECO:0000266"/>
    <property type="project" value="RGD"/>
</dbReference>
<dbReference type="GO" id="GO:0008233">
    <property type="term" value="F:peptidase activity"/>
    <property type="evidence" value="ECO:0000266"/>
    <property type="project" value="RGD"/>
</dbReference>
<dbReference type="GO" id="GO:0004252">
    <property type="term" value="F:serine-type endopeptidase activity"/>
    <property type="evidence" value="ECO:0000266"/>
    <property type="project" value="RGD"/>
</dbReference>
<dbReference type="GO" id="GO:0006887">
    <property type="term" value="P:exocytosis"/>
    <property type="evidence" value="ECO:0000250"/>
    <property type="project" value="UniProtKB"/>
</dbReference>
<dbReference type="GO" id="GO:0006508">
    <property type="term" value="P:proteolysis"/>
    <property type="evidence" value="ECO:0000266"/>
    <property type="project" value="RGD"/>
</dbReference>
<dbReference type="GO" id="GO:0031638">
    <property type="term" value="P:zymogen activation"/>
    <property type="evidence" value="ECO:0000266"/>
    <property type="project" value="RGD"/>
</dbReference>
<dbReference type="CDD" id="cd00190">
    <property type="entry name" value="Tryp_SPc"/>
    <property type="match status" value="1"/>
</dbReference>
<dbReference type="FunFam" id="2.40.10.10:FF:000053">
    <property type="entry name" value="Neurotrypsin"/>
    <property type="match status" value="1"/>
</dbReference>
<dbReference type="FunFam" id="2.40.20.10:FF:000010">
    <property type="entry name" value="Neurotrypsin"/>
    <property type="match status" value="1"/>
</dbReference>
<dbReference type="FunFam" id="3.10.250.10:FF:000005">
    <property type="entry name" value="Neurotrypsin isoform A"/>
    <property type="match status" value="2"/>
</dbReference>
<dbReference type="FunFam" id="3.10.250.10:FF:000006">
    <property type="entry name" value="neurotrypsin isoform X2"/>
    <property type="match status" value="1"/>
</dbReference>
<dbReference type="Gene3D" id="2.40.20.10">
    <property type="entry name" value="Plasminogen Kringle 4"/>
    <property type="match status" value="1"/>
</dbReference>
<dbReference type="Gene3D" id="3.10.250.10">
    <property type="entry name" value="SRCR-like domain"/>
    <property type="match status" value="3"/>
</dbReference>
<dbReference type="Gene3D" id="2.40.10.10">
    <property type="entry name" value="Trypsin-like serine proteases"/>
    <property type="match status" value="1"/>
</dbReference>
<dbReference type="InterPro" id="IPR000001">
    <property type="entry name" value="Kringle"/>
</dbReference>
<dbReference type="InterPro" id="IPR013806">
    <property type="entry name" value="Kringle-like"/>
</dbReference>
<dbReference type="InterPro" id="IPR018056">
    <property type="entry name" value="Kringle_CS"/>
</dbReference>
<dbReference type="InterPro" id="IPR038178">
    <property type="entry name" value="Kringle_sf"/>
</dbReference>
<dbReference type="InterPro" id="IPR009003">
    <property type="entry name" value="Peptidase_S1_PA"/>
</dbReference>
<dbReference type="InterPro" id="IPR043504">
    <property type="entry name" value="Peptidase_S1_PA_chymotrypsin"/>
</dbReference>
<dbReference type="InterPro" id="IPR001314">
    <property type="entry name" value="Peptidase_S1A"/>
</dbReference>
<dbReference type="InterPro" id="IPR001190">
    <property type="entry name" value="SRCR"/>
</dbReference>
<dbReference type="InterPro" id="IPR036772">
    <property type="entry name" value="SRCR-like_dom_sf"/>
</dbReference>
<dbReference type="InterPro" id="IPR001254">
    <property type="entry name" value="Trypsin_dom"/>
</dbReference>
<dbReference type="InterPro" id="IPR018114">
    <property type="entry name" value="TRYPSIN_HIS"/>
</dbReference>
<dbReference type="InterPro" id="IPR033116">
    <property type="entry name" value="TRYPSIN_SER"/>
</dbReference>
<dbReference type="PANTHER" id="PTHR19331:SF22">
    <property type="entry name" value="DELETED IN MALIGNANT BRAIN TUMORS 1 PROTEIN"/>
    <property type="match status" value="1"/>
</dbReference>
<dbReference type="PANTHER" id="PTHR19331">
    <property type="entry name" value="SCAVENGER RECEPTOR DOMAIN-CONTAINING"/>
    <property type="match status" value="1"/>
</dbReference>
<dbReference type="Pfam" id="PF00530">
    <property type="entry name" value="SRCR"/>
    <property type="match status" value="3"/>
</dbReference>
<dbReference type="Pfam" id="PF00089">
    <property type="entry name" value="Trypsin"/>
    <property type="match status" value="1"/>
</dbReference>
<dbReference type="PRINTS" id="PR00722">
    <property type="entry name" value="CHYMOTRYPSIN"/>
</dbReference>
<dbReference type="PRINTS" id="PR00258">
    <property type="entry name" value="SPERACTRCPTR"/>
</dbReference>
<dbReference type="SMART" id="SM00130">
    <property type="entry name" value="KR"/>
    <property type="match status" value="1"/>
</dbReference>
<dbReference type="SMART" id="SM00202">
    <property type="entry name" value="SR"/>
    <property type="match status" value="3"/>
</dbReference>
<dbReference type="SMART" id="SM00020">
    <property type="entry name" value="Tryp_SPc"/>
    <property type="match status" value="1"/>
</dbReference>
<dbReference type="SUPFAM" id="SSF57440">
    <property type="entry name" value="Kringle-like"/>
    <property type="match status" value="1"/>
</dbReference>
<dbReference type="SUPFAM" id="SSF56487">
    <property type="entry name" value="SRCR-like"/>
    <property type="match status" value="3"/>
</dbReference>
<dbReference type="SUPFAM" id="SSF50494">
    <property type="entry name" value="Trypsin-like serine proteases"/>
    <property type="match status" value="1"/>
</dbReference>
<dbReference type="PROSITE" id="PS00021">
    <property type="entry name" value="KRINGLE_1"/>
    <property type="match status" value="1"/>
</dbReference>
<dbReference type="PROSITE" id="PS50070">
    <property type="entry name" value="KRINGLE_2"/>
    <property type="match status" value="1"/>
</dbReference>
<dbReference type="PROSITE" id="PS00420">
    <property type="entry name" value="SRCR_1"/>
    <property type="match status" value="3"/>
</dbReference>
<dbReference type="PROSITE" id="PS50287">
    <property type="entry name" value="SRCR_2"/>
    <property type="match status" value="3"/>
</dbReference>
<dbReference type="PROSITE" id="PS50240">
    <property type="entry name" value="TRYPSIN_DOM"/>
    <property type="match status" value="1"/>
</dbReference>
<dbReference type="PROSITE" id="PS00134">
    <property type="entry name" value="TRYPSIN_HIS"/>
    <property type="match status" value="1"/>
</dbReference>
<dbReference type="PROSITE" id="PS00135">
    <property type="entry name" value="TRYPSIN_SER"/>
    <property type="match status" value="1"/>
</dbReference>
<organism>
    <name type="scientific">Rattus norvegicus</name>
    <name type="common">Rat</name>
    <dbReference type="NCBI Taxonomy" id="10116"/>
    <lineage>
        <taxon>Eukaryota</taxon>
        <taxon>Metazoa</taxon>
        <taxon>Chordata</taxon>
        <taxon>Craniata</taxon>
        <taxon>Vertebrata</taxon>
        <taxon>Euteleostomi</taxon>
        <taxon>Mammalia</taxon>
        <taxon>Eutheria</taxon>
        <taxon>Euarchontoglires</taxon>
        <taxon>Glires</taxon>
        <taxon>Rodentia</taxon>
        <taxon>Myomorpha</taxon>
        <taxon>Muroidea</taxon>
        <taxon>Muridae</taxon>
        <taxon>Murinae</taxon>
        <taxon>Rattus</taxon>
    </lineage>
</organism>
<evidence type="ECO:0000250" key="1"/>
<evidence type="ECO:0000255" key="2"/>
<evidence type="ECO:0000255" key="3">
    <source>
        <dbReference type="PROSITE-ProRule" id="PRU00121"/>
    </source>
</evidence>
<evidence type="ECO:0000255" key="4">
    <source>
        <dbReference type="PROSITE-ProRule" id="PRU00196"/>
    </source>
</evidence>
<evidence type="ECO:0000255" key="5">
    <source>
        <dbReference type="PROSITE-ProRule" id="PRU00274"/>
    </source>
</evidence>
<evidence type="ECO:0000256" key="6">
    <source>
        <dbReference type="SAM" id="MobiDB-lite"/>
    </source>
</evidence>
<evidence type="ECO:0000269" key="7">
    <source>
    </source>
</evidence>
<evidence type="ECO:0000305" key="8"/>
<evidence type="ECO:0007829" key="9">
    <source>
        <dbReference type="PDB" id="2K4R"/>
    </source>
</evidence>
<feature type="signal peptide" evidence="2">
    <location>
        <begin position="1"/>
        <end position="21"/>
    </location>
</feature>
<feature type="chain" id="PRO_0000416843" description="Neurotrypsin">
    <location>
        <begin position="22"/>
        <end position="761"/>
    </location>
</feature>
<feature type="domain" description="Kringle" evidence="3">
    <location>
        <begin position="85"/>
        <end position="157"/>
    </location>
</feature>
<feature type="domain" description="SRCR 1" evidence="4">
    <location>
        <begin position="166"/>
        <end position="267"/>
    </location>
</feature>
<feature type="domain" description="SRCR 2" evidence="4">
    <location>
        <begin position="273"/>
        <end position="373"/>
    </location>
</feature>
<feature type="domain" description="SRCR 3" evidence="4">
    <location>
        <begin position="386"/>
        <end position="487"/>
    </location>
</feature>
<feature type="domain" description="Peptidase S1" evidence="5">
    <location>
        <begin position="517"/>
        <end position="760"/>
    </location>
</feature>
<feature type="region of interest" description="Disordered" evidence="6">
    <location>
        <begin position="26"/>
        <end position="88"/>
    </location>
</feature>
<feature type="region of interest" description="Zymogen activation region" evidence="1">
    <location>
        <begin position="505"/>
        <end position="516"/>
    </location>
</feature>
<feature type="compositionally biased region" description="Pro residues" evidence="6">
    <location>
        <begin position="54"/>
        <end position="63"/>
    </location>
</feature>
<feature type="active site" description="Charge relay system" evidence="1">
    <location>
        <position position="562"/>
    </location>
</feature>
<feature type="active site" description="Charge relay system" evidence="1">
    <location>
        <position position="612"/>
    </location>
</feature>
<feature type="active site" description="Charge relay system" evidence="1">
    <location>
        <position position="711"/>
    </location>
</feature>
<feature type="site" description="Reactive bond homolog" evidence="2">
    <location>
        <begin position="516"/>
        <end position="517"/>
    </location>
</feature>
<feature type="glycosylation site" description="N-linked (GlcNAc...) asparagine" evidence="2">
    <location>
        <position position="93"/>
    </location>
</feature>
<feature type="glycosylation site" description="N-linked (GlcNAc...) asparagine" evidence="2">
    <location>
        <position position="521"/>
    </location>
</feature>
<feature type="glycosylation site" description="N-linked (GlcNAc...) asparagine" evidence="2">
    <location>
        <position position="569"/>
    </location>
</feature>
<feature type="disulfide bond" evidence="7">
    <location>
        <begin position="85"/>
        <end position="157"/>
    </location>
</feature>
<feature type="disulfide bond" evidence="7">
    <location>
        <begin position="101"/>
        <end position="141"/>
    </location>
</feature>
<feature type="disulfide bond" evidence="7">
    <location>
        <begin position="130"/>
        <end position="155"/>
    </location>
</feature>
<feature type="disulfide bond" evidence="1">
    <location>
        <begin position="191"/>
        <end position="255"/>
    </location>
</feature>
<feature type="disulfide bond" evidence="1">
    <location>
        <begin position="204"/>
        <end position="265"/>
    </location>
</feature>
<feature type="disulfide bond" evidence="1">
    <location>
        <begin position="235"/>
        <end position="245"/>
    </location>
</feature>
<feature type="disulfide bond" evidence="1">
    <location>
        <begin position="298"/>
        <end position="361"/>
    </location>
</feature>
<feature type="disulfide bond" evidence="1">
    <location>
        <begin position="311"/>
        <end position="371"/>
    </location>
</feature>
<feature type="disulfide bond" evidence="1">
    <location>
        <begin position="341"/>
        <end position="351"/>
    </location>
</feature>
<feature type="disulfide bond" evidence="1">
    <location>
        <begin position="411"/>
        <end position="475"/>
    </location>
</feature>
<feature type="disulfide bond" evidence="1">
    <location>
        <begin position="424"/>
        <end position="485"/>
    </location>
</feature>
<feature type="disulfide bond" evidence="1">
    <location>
        <begin position="455"/>
        <end position="465"/>
    </location>
</feature>
<feature type="disulfide bond" evidence="2">
    <location>
        <begin position="505"/>
        <end position="636"/>
    </location>
</feature>
<feature type="disulfide bond" evidence="1">
    <location>
        <begin position="547"/>
        <end position="563"/>
    </location>
</feature>
<feature type="disulfide bond" evidence="1">
    <location>
        <begin position="651"/>
        <end position="717"/>
    </location>
</feature>
<feature type="disulfide bond" evidence="1">
    <location>
        <begin position="680"/>
        <end position="694"/>
    </location>
</feature>
<feature type="disulfide bond" evidence="1">
    <location>
        <begin position="707"/>
        <end position="736"/>
    </location>
</feature>
<feature type="sequence conflict" description="In Ref. 1; CAC35028." evidence="8" ref="1">
    <original>G</original>
    <variation>D</variation>
    <location>
        <position position="134"/>
    </location>
</feature>
<feature type="sequence conflict" description="In Ref. 1; CAC35028." evidence="8" ref="1">
    <original>S</original>
    <variation>N</variation>
    <location>
        <position position="404"/>
    </location>
</feature>
<feature type="sequence conflict" description="In Ref. 1; CAC35028." evidence="8" ref="1">
    <original>K</original>
    <variation>T</variation>
    <location>
        <position position="515"/>
    </location>
</feature>
<feature type="sequence conflict" description="In Ref. 1; CAC35028." evidence="8" ref="1">
    <original>K</original>
    <variation>T</variation>
    <location>
        <position position="565"/>
    </location>
</feature>
<feature type="sequence conflict" description="In Ref. 1; CAC35028." evidence="8" ref="1">
    <original>E</original>
    <variation>G</variation>
    <location>
        <position position="588"/>
    </location>
</feature>
<feature type="sequence conflict" description="In Ref. 1; CAC35028." evidence="8" ref="1">
    <original>E</original>
    <variation>D</variation>
    <location>
        <position position="592"/>
    </location>
</feature>
<feature type="strand" evidence="9">
    <location>
        <begin position="92"/>
        <end position="95"/>
    </location>
</feature>
<feature type="strand" evidence="9">
    <location>
        <begin position="98"/>
        <end position="101"/>
    </location>
</feature>
<feature type="helix" evidence="9">
    <location>
        <begin position="104"/>
        <end position="106"/>
    </location>
</feature>
<feature type="helix" evidence="9">
    <location>
        <begin position="119"/>
        <end position="121"/>
    </location>
</feature>
<feature type="strand" evidence="9">
    <location>
        <begin position="131"/>
        <end position="134"/>
    </location>
</feature>
<feature type="turn" evidence="9">
    <location>
        <begin position="135"/>
        <end position="137"/>
    </location>
</feature>
<feature type="strand" evidence="9">
    <location>
        <begin position="138"/>
        <end position="144"/>
    </location>
</feature>
<feature type="strand" evidence="9">
    <location>
        <begin position="150"/>
        <end position="154"/>
    </location>
</feature>
<feature type="strand" evidence="9">
    <location>
        <begin position="156"/>
        <end position="158"/>
    </location>
</feature>
<protein>
    <recommendedName>
        <fullName>Neurotrypsin</fullName>
        <ecNumber>3.4.21.-</ecNumber>
    </recommendedName>
    <alternativeName>
        <fullName>Serine protease 12</fullName>
    </alternativeName>
</protein>
<proteinExistence type="evidence at protein level"/>
<reference key="1">
    <citation type="submission" date="2002-10" db="EMBL/GenBank/DDBJ databases">
        <title>Cloning and sequencing of the cDNA encoding rat neurotrypsin.</title>
        <authorList>
            <person name="Hintsch G."/>
            <person name="Sonderegger P."/>
        </authorList>
    </citation>
    <scope>NUCLEOTIDE SEQUENCE [MRNA]</scope>
</reference>
<reference key="2">
    <citation type="journal article" date="2004" name="Nature">
        <title>Genome sequence of the Brown Norway rat yields insights into mammalian evolution.</title>
        <authorList>
            <person name="Gibbs R.A."/>
            <person name="Weinstock G.M."/>
            <person name="Metzker M.L."/>
            <person name="Muzny D.M."/>
            <person name="Sodergren E.J."/>
            <person name="Scherer S."/>
            <person name="Scott G."/>
            <person name="Steffen D."/>
            <person name="Worley K.C."/>
            <person name="Burch P.E."/>
            <person name="Okwuonu G."/>
            <person name="Hines S."/>
            <person name="Lewis L."/>
            <person name="Deramo C."/>
            <person name="Delgado O."/>
            <person name="Dugan-Rocha S."/>
            <person name="Miner G."/>
            <person name="Morgan M."/>
            <person name="Hawes A."/>
            <person name="Gill R."/>
            <person name="Holt R.A."/>
            <person name="Adams M.D."/>
            <person name="Amanatides P.G."/>
            <person name="Baden-Tillson H."/>
            <person name="Barnstead M."/>
            <person name="Chin S."/>
            <person name="Evans C.A."/>
            <person name="Ferriera S."/>
            <person name="Fosler C."/>
            <person name="Glodek A."/>
            <person name="Gu Z."/>
            <person name="Jennings D."/>
            <person name="Kraft C.L."/>
            <person name="Nguyen T."/>
            <person name="Pfannkoch C.M."/>
            <person name="Sitter C."/>
            <person name="Sutton G.G."/>
            <person name="Venter J.C."/>
            <person name="Woodage T."/>
            <person name="Smith D."/>
            <person name="Lee H.-M."/>
            <person name="Gustafson E."/>
            <person name="Cahill P."/>
            <person name="Kana A."/>
            <person name="Doucette-Stamm L."/>
            <person name="Weinstock K."/>
            <person name="Fechtel K."/>
            <person name="Weiss R.B."/>
            <person name="Dunn D.M."/>
            <person name="Green E.D."/>
            <person name="Blakesley R.W."/>
            <person name="Bouffard G.G."/>
            <person name="De Jong P.J."/>
            <person name="Osoegawa K."/>
            <person name="Zhu B."/>
            <person name="Marra M."/>
            <person name="Schein J."/>
            <person name="Bosdet I."/>
            <person name="Fjell C."/>
            <person name="Jones S."/>
            <person name="Krzywinski M."/>
            <person name="Mathewson C."/>
            <person name="Siddiqui A."/>
            <person name="Wye N."/>
            <person name="McPherson J."/>
            <person name="Zhao S."/>
            <person name="Fraser C.M."/>
            <person name="Shetty J."/>
            <person name="Shatsman S."/>
            <person name="Geer K."/>
            <person name="Chen Y."/>
            <person name="Abramzon S."/>
            <person name="Nierman W.C."/>
            <person name="Havlak P.H."/>
            <person name="Chen R."/>
            <person name="Durbin K.J."/>
            <person name="Egan A."/>
            <person name="Ren Y."/>
            <person name="Song X.-Z."/>
            <person name="Li B."/>
            <person name="Liu Y."/>
            <person name="Qin X."/>
            <person name="Cawley S."/>
            <person name="Cooney A.J."/>
            <person name="D'Souza L.M."/>
            <person name="Martin K."/>
            <person name="Wu J.Q."/>
            <person name="Gonzalez-Garay M.L."/>
            <person name="Jackson A.R."/>
            <person name="Kalafus K.J."/>
            <person name="McLeod M.P."/>
            <person name="Milosavljevic A."/>
            <person name="Virk D."/>
            <person name="Volkov A."/>
            <person name="Wheeler D.A."/>
            <person name="Zhang Z."/>
            <person name="Bailey J.A."/>
            <person name="Eichler E.E."/>
            <person name="Tuzun E."/>
            <person name="Birney E."/>
            <person name="Mongin E."/>
            <person name="Ureta-Vidal A."/>
            <person name="Woodwark C."/>
            <person name="Zdobnov E."/>
            <person name="Bork P."/>
            <person name="Suyama M."/>
            <person name="Torrents D."/>
            <person name="Alexandersson M."/>
            <person name="Trask B.J."/>
            <person name="Young J.M."/>
            <person name="Huang H."/>
            <person name="Wang H."/>
            <person name="Xing H."/>
            <person name="Daniels S."/>
            <person name="Gietzen D."/>
            <person name="Schmidt J."/>
            <person name="Stevens K."/>
            <person name="Vitt U."/>
            <person name="Wingrove J."/>
            <person name="Camara F."/>
            <person name="Mar Alba M."/>
            <person name="Abril J.F."/>
            <person name="Guigo R."/>
            <person name="Smit A."/>
            <person name="Dubchak I."/>
            <person name="Rubin E.M."/>
            <person name="Couronne O."/>
            <person name="Poliakov A."/>
            <person name="Huebner N."/>
            <person name="Ganten D."/>
            <person name="Goesele C."/>
            <person name="Hummel O."/>
            <person name="Kreitler T."/>
            <person name="Lee Y.-A."/>
            <person name="Monti J."/>
            <person name="Schulz H."/>
            <person name="Zimdahl H."/>
            <person name="Himmelbauer H."/>
            <person name="Lehrach H."/>
            <person name="Jacob H.J."/>
            <person name="Bromberg S."/>
            <person name="Gullings-Handley J."/>
            <person name="Jensen-Seaman M.I."/>
            <person name="Kwitek A.E."/>
            <person name="Lazar J."/>
            <person name="Pasko D."/>
            <person name="Tonellato P.J."/>
            <person name="Twigger S."/>
            <person name="Ponting C.P."/>
            <person name="Duarte J.M."/>
            <person name="Rice S."/>
            <person name="Goodstadt L."/>
            <person name="Beatson S.A."/>
            <person name="Emes R.D."/>
            <person name="Winter E.E."/>
            <person name="Webber C."/>
            <person name="Brandt P."/>
            <person name="Nyakatura G."/>
            <person name="Adetobi M."/>
            <person name="Chiaromonte F."/>
            <person name="Elnitski L."/>
            <person name="Eswara P."/>
            <person name="Hardison R.C."/>
            <person name="Hou M."/>
            <person name="Kolbe D."/>
            <person name="Makova K."/>
            <person name="Miller W."/>
            <person name="Nekrutenko A."/>
            <person name="Riemer C."/>
            <person name="Schwartz S."/>
            <person name="Taylor J."/>
            <person name="Yang S."/>
            <person name="Zhang Y."/>
            <person name="Lindpaintner K."/>
            <person name="Andrews T.D."/>
            <person name="Caccamo M."/>
            <person name="Clamp M."/>
            <person name="Clarke L."/>
            <person name="Curwen V."/>
            <person name="Durbin R.M."/>
            <person name="Eyras E."/>
            <person name="Searle S.M."/>
            <person name="Cooper G.M."/>
            <person name="Batzoglou S."/>
            <person name="Brudno M."/>
            <person name="Sidow A."/>
            <person name="Stone E.A."/>
            <person name="Payseur B.A."/>
            <person name="Bourque G."/>
            <person name="Lopez-Otin C."/>
            <person name="Puente X.S."/>
            <person name="Chakrabarti K."/>
            <person name="Chatterji S."/>
            <person name="Dewey C."/>
            <person name="Pachter L."/>
            <person name="Bray N."/>
            <person name="Yap V.B."/>
            <person name="Caspi A."/>
            <person name="Tesler G."/>
            <person name="Pevzner P.A."/>
            <person name="Haussler D."/>
            <person name="Roskin K.M."/>
            <person name="Baertsch R."/>
            <person name="Clawson H."/>
            <person name="Furey T.S."/>
            <person name="Hinrichs A.S."/>
            <person name="Karolchik D."/>
            <person name="Kent W.J."/>
            <person name="Rosenbloom K.R."/>
            <person name="Trumbower H."/>
            <person name="Weirauch M."/>
            <person name="Cooper D.N."/>
            <person name="Stenson P.D."/>
            <person name="Ma B."/>
            <person name="Brent M."/>
            <person name="Arumugam M."/>
            <person name="Shteynberg D."/>
            <person name="Copley R.R."/>
            <person name="Taylor M.S."/>
            <person name="Riethman H."/>
            <person name="Mudunuri U."/>
            <person name="Peterson J."/>
            <person name="Guyer M."/>
            <person name="Felsenfeld A."/>
            <person name="Old S."/>
            <person name="Mockrin S."/>
            <person name="Collins F.S."/>
        </authorList>
    </citation>
    <scope>NUCLEOTIDE SEQUENCE [LARGE SCALE GENOMIC DNA]</scope>
    <source>
        <strain>Brown Norway</strain>
    </source>
</reference>
<reference key="3">
    <citation type="submission" date="2005-07" db="EMBL/GenBank/DDBJ databases">
        <authorList>
            <person name="Mural R.J."/>
            <person name="Adams M.D."/>
            <person name="Myers E.W."/>
            <person name="Smith H.O."/>
            <person name="Venter J.C."/>
        </authorList>
    </citation>
    <scope>NUCLEOTIDE SEQUENCE [LARGE SCALE GENOMIC DNA]</scope>
    <source>
        <strain>Brown Norway</strain>
    </source>
</reference>
<reference key="4">
    <citation type="journal article" date="2008" name="Biochemistry">
        <title>NMR solution structure of the neurotrypsin Kringle domain.</title>
        <authorList>
            <person name="Ozhogina O.A."/>
            <person name="Grishaev A."/>
            <person name="Bominaar E.L."/>
            <person name="Patthy L."/>
            <person name="Trexler M."/>
            <person name="Llinas M."/>
        </authorList>
    </citation>
    <scope>STRUCTURE BY NMR OF 84-160</scope>
    <scope>PARTIAL PROTEIN SEQUENCE</scope>
    <scope>DISULFIDE BOND</scope>
    <scope>IDENTIFICATION BY MASS SPECTROMETRY</scope>
</reference>
<accession>G3V801</accession>
<accession>Q99JC8</accession>
<gene>
    <name type="primary">Prss12</name>
</gene>
<name>NETR_RAT</name>
<comment type="function">
    <text evidence="1">Plays a role in neuronal plasticity and the proteolytic action may subserve structural reorganizations associated with learning and memory operations.</text>
</comment>
<comment type="subcellular location">
    <subcellularLocation>
        <location evidence="1">Secreted</location>
    </subcellularLocation>
</comment>
<comment type="similarity">
    <text evidence="5">Belongs to the peptidase S1 family.</text>
</comment>
<keyword id="KW-0002">3D-structure</keyword>
<keyword id="KW-0903">Direct protein sequencing</keyword>
<keyword id="KW-1015">Disulfide bond</keyword>
<keyword id="KW-0325">Glycoprotein</keyword>
<keyword id="KW-0378">Hydrolase</keyword>
<keyword id="KW-0420">Kringle</keyword>
<keyword id="KW-0645">Protease</keyword>
<keyword id="KW-1185">Reference proteome</keyword>
<keyword id="KW-0677">Repeat</keyword>
<keyword id="KW-0964">Secreted</keyword>
<keyword id="KW-0720">Serine protease</keyword>
<keyword id="KW-0732">Signal</keyword>
<sequence length="761" mass="84220">MALARCVLAVILGVLSEVARADPVLHSPLHRPHPSPPRSQHAHYLPSSRRPPRTPRFPLPPRAPAAQRPQLLSTRHTPPTISRRCGAGEPWGNATNLGVPCLHWDEVPPFLERSPPASWAELRGQPHNFCRSPGGAGRPWCFYRNAQGKVDWGYCDCGQGPALPVIRLVGGKSGHEGRVELYHAGQWGTICDDQWDDADAEVICRQLGLSGIAKAWHQAHFGEGSGPILLDEVRCTGNELSIEQCPKSSWGEHNCGHKEDAGVSCAPLTDGVIRLSGGKSVHEGRLEVYYRGQWGTVCDDGWTEMNTYVACRLLGFKYGKQSSVNHFEGSSRPIWLDDVSCSGKEASFIQCSRRQWGRHDCSHREDVGLTCYPDSDGHRLSPGFPIRLMDGENKREGRVEVFVSGQWGTICDDGWTDKHAAVICRQLGYKGPARARTMAYFGEGKGPIHMDNVKCTGNEKALADCVKQDIGRHNCRHSEDAGVICDYYEKKTSGHGNKETLSSGCGLRLLHRRQKRIIGGNNSLRGAWPWQASLRLKSTHGDGRLLCGATLLSSCWVLTAAHCFKRYGNNSRSYAVRVGDYHTLVPEEFEQEIGVQQIVIHRNYRPDSSDYDIALVRLQGSGEQCARLSTHVLPACLPLWRERPQKTASNCHITGWGDTGRAYSRTLQQAAVPLLPKRFCKERYKGLFTGRMLCAGNLQEDNRVDSCQGDSGGPLMCEKPDETWVVYGVTSWGYGCGIKDTPGVYTRVPAFVPWIKSVTSL</sequence>